<protein>
    <recommendedName>
        <fullName>Profilin-3</fullName>
    </recommendedName>
    <alternativeName>
        <fullName>GD4-5</fullName>
    </alternativeName>
    <alternativeName>
        <fullName>Pollen allergen Mal d 4.0101</fullName>
    </alternativeName>
    <allergenName>Mal d 4.0101</allergenName>
</protein>
<organism>
    <name type="scientific">Malus domestica</name>
    <name type="common">Apple</name>
    <name type="synonym">Pyrus malus</name>
    <dbReference type="NCBI Taxonomy" id="3750"/>
    <lineage>
        <taxon>Eukaryota</taxon>
        <taxon>Viridiplantae</taxon>
        <taxon>Streptophyta</taxon>
        <taxon>Embryophyta</taxon>
        <taxon>Tracheophyta</taxon>
        <taxon>Spermatophyta</taxon>
        <taxon>Magnoliopsida</taxon>
        <taxon>eudicotyledons</taxon>
        <taxon>Gunneridae</taxon>
        <taxon>Pentapetalae</taxon>
        <taxon>rosids</taxon>
        <taxon>fabids</taxon>
        <taxon>Rosales</taxon>
        <taxon>Rosaceae</taxon>
        <taxon>Amygdaloideae</taxon>
        <taxon>Maleae</taxon>
        <taxon>Malus</taxon>
    </lineage>
</organism>
<sequence>MSWQAYVDDHLMCDIDGNRLTAAAILGQDGSVWSQSASFPAFKPEEIAAILKDFDQPGTLAPTGLFLGGTKYMVIQGEPGAVIRGKKGSGGITIKKTSQALLIGIYDEPVTPGQCNIVVERLGDYLIEQGL</sequence>
<dbReference type="EMBL" id="AF129428">
    <property type="protein sequence ID" value="AAD29414.1"/>
    <property type="molecule type" value="mRNA"/>
</dbReference>
<dbReference type="SMR" id="Q9XF42"/>
<dbReference type="Allergome" id="2414">
    <property type="allergen name" value="Mal d 4.0101"/>
</dbReference>
<dbReference type="Allergome" id="796">
    <property type="allergen name" value="Mal d 4"/>
</dbReference>
<dbReference type="GO" id="GO:0005938">
    <property type="term" value="C:cell cortex"/>
    <property type="evidence" value="ECO:0007669"/>
    <property type="project" value="TreeGrafter"/>
</dbReference>
<dbReference type="GO" id="GO:0005856">
    <property type="term" value="C:cytoskeleton"/>
    <property type="evidence" value="ECO:0007669"/>
    <property type="project" value="UniProtKB-SubCell"/>
</dbReference>
<dbReference type="GO" id="GO:0003785">
    <property type="term" value="F:actin monomer binding"/>
    <property type="evidence" value="ECO:0007669"/>
    <property type="project" value="TreeGrafter"/>
</dbReference>
<dbReference type="CDD" id="cd00148">
    <property type="entry name" value="PROF"/>
    <property type="match status" value="1"/>
</dbReference>
<dbReference type="FunFam" id="3.30.450.30:FF:000001">
    <property type="entry name" value="Profilin"/>
    <property type="match status" value="1"/>
</dbReference>
<dbReference type="Gene3D" id="3.30.450.30">
    <property type="entry name" value="Dynein light chain 2a, cytoplasmic"/>
    <property type="match status" value="1"/>
</dbReference>
<dbReference type="InterPro" id="IPR048278">
    <property type="entry name" value="PFN"/>
</dbReference>
<dbReference type="InterPro" id="IPR005455">
    <property type="entry name" value="PFN_euk"/>
</dbReference>
<dbReference type="InterPro" id="IPR036140">
    <property type="entry name" value="PFN_sf"/>
</dbReference>
<dbReference type="InterPro" id="IPR027310">
    <property type="entry name" value="Profilin_CS"/>
</dbReference>
<dbReference type="PANTHER" id="PTHR11604">
    <property type="entry name" value="PROFILIN"/>
    <property type="match status" value="1"/>
</dbReference>
<dbReference type="PANTHER" id="PTHR11604:SF59">
    <property type="entry name" value="PROFILIN"/>
    <property type="match status" value="1"/>
</dbReference>
<dbReference type="Pfam" id="PF00235">
    <property type="entry name" value="Profilin"/>
    <property type="match status" value="1"/>
</dbReference>
<dbReference type="PRINTS" id="PR00392">
    <property type="entry name" value="PROFILIN"/>
</dbReference>
<dbReference type="PRINTS" id="PR01640">
    <property type="entry name" value="PROFILINPLNT"/>
</dbReference>
<dbReference type="SMART" id="SM00392">
    <property type="entry name" value="PROF"/>
    <property type="match status" value="1"/>
</dbReference>
<dbReference type="SUPFAM" id="SSF55770">
    <property type="entry name" value="Profilin (actin-binding protein)"/>
    <property type="match status" value="1"/>
</dbReference>
<dbReference type="PROSITE" id="PS00414">
    <property type="entry name" value="PROFILIN"/>
    <property type="match status" value="1"/>
</dbReference>
<reference key="1">
    <citation type="submission" date="1999-02" db="EMBL/GenBank/DDBJ databases">
        <title>Characterization of profilin from apple as the allergen Mal d 4.</title>
        <authorList>
            <person name="Scheurer S."/>
            <person name="Wangorsch A."/>
            <person name="Haustein D."/>
            <person name="Vieths S."/>
        </authorList>
    </citation>
    <scope>NUCLEOTIDE SEQUENCE [MRNA]</scope>
    <source>
        <strain>cv. Golden Delicious</strain>
    </source>
</reference>
<evidence type="ECO:0000250" key="1"/>
<evidence type="ECO:0000305" key="2"/>
<proteinExistence type="evidence at protein level"/>
<comment type="function">
    <text evidence="1">Binds to actin and affects the structure of the cytoskeleton. At high concentrations, profilin prevents the polymerization of actin, whereas it enhances it at low concentrations. By binding to PIP2, it inhibits the formation of IP3 and DG (By similarity).</text>
</comment>
<comment type="subunit">
    <text>Occurs in many kinds of cells as a complex with monomeric actin in a 1:1 ratio.</text>
</comment>
<comment type="subcellular location">
    <subcellularLocation>
        <location evidence="1">Cytoplasm</location>
        <location evidence="1">Cytoskeleton</location>
    </subcellularLocation>
</comment>
<comment type="allergen">
    <text>Causes an allergic reaction in human.</text>
</comment>
<comment type="similarity">
    <text evidence="2">Belongs to the profilin family.</text>
</comment>
<keyword id="KW-0009">Actin-binding</keyword>
<keyword id="KW-0020">Allergen</keyword>
<keyword id="KW-0963">Cytoplasm</keyword>
<keyword id="KW-0206">Cytoskeleton</keyword>
<name>PROF3_MALDO</name>
<accession>Q9XF42</accession>
<feature type="initiator methionine" description="Removed" evidence="1">
    <location>
        <position position="1"/>
    </location>
</feature>
<feature type="chain" id="PRO_0000199653" description="Profilin-3">
    <location>
        <begin position="2"/>
        <end position="131"/>
    </location>
</feature>